<comment type="function">
    <text evidence="1">Involved in the biosynthesis of lipid A, a phosphorylated glycolipid that anchors the lipopolysaccharide to the outer membrane of the cell.</text>
</comment>
<comment type="catalytic activity">
    <reaction evidence="1">
        <text>a (3R)-hydroxyacyl-[ACP] + UDP-N-acetyl-alpha-D-glucosamine = a UDP-3-O-[(3R)-3-hydroxyacyl]-N-acetyl-alpha-D-glucosamine + holo-[ACP]</text>
        <dbReference type="Rhea" id="RHEA:67812"/>
        <dbReference type="Rhea" id="RHEA-COMP:9685"/>
        <dbReference type="Rhea" id="RHEA-COMP:9945"/>
        <dbReference type="ChEBI" id="CHEBI:57705"/>
        <dbReference type="ChEBI" id="CHEBI:64479"/>
        <dbReference type="ChEBI" id="CHEBI:78827"/>
        <dbReference type="ChEBI" id="CHEBI:173225"/>
        <dbReference type="EC" id="2.3.1.129"/>
    </reaction>
</comment>
<comment type="pathway">
    <text evidence="1">Glycolipid biosynthesis; lipid IV(A) biosynthesis; lipid IV(A) from (3R)-3-hydroxytetradecanoyl-[acyl-carrier-protein] and UDP-N-acetyl-alpha-D-glucosamine: step 1/6.</text>
</comment>
<comment type="subunit">
    <text evidence="1">Homotrimer.</text>
</comment>
<comment type="subcellular location">
    <subcellularLocation>
        <location evidence="1">Cytoplasm</location>
    </subcellularLocation>
</comment>
<comment type="similarity">
    <text evidence="1">Belongs to the transferase hexapeptide repeat family. LpxA subfamily.</text>
</comment>
<keyword id="KW-0012">Acyltransferase</keyword>
<keyword id="KW-0963">Cytoplasm</keyword>
<keyword id="KW-0441">Lipid A biosynthesis</keyword>
<keyword id="KW-0444">Lipid biosynthesis</keyword>
<keyword id="KW-0443">Lipid metabolism</keyword>
<keyword id="KW-0677">Repeat</keyword>
<keyword id="KW-0808">Transferase</keyword>
<accession>B2JZ22</accession>
<name>LPXA_YERPB</name>
<reference key="1">
    <citation type="submission" date="2008-04" db="EMBL/GenBank/DDBJ databases">
        <title>Complete sequence of Yersinia pseudotuberculosis PB1/+.</title>
        <authorList>
            <person name="Copeland A."/>
            <person name="Lucas S."/>
            <person name="Lapidus A."/>
            <person name="Glavina del Rio T."/>
            <person name="Dalin E."/>
            <person name="Tice H."/>
            <person name="Bruce D."/>
            <person name="Goodwin L."/>
            <person name="Pitluck S."/>
            <person name="Munk A.C."/>
            <person name="Brettin T."/>
            <person name="Detter J.C."/>
            <person name="Han C."/>
            <person name="Tapia R."/>
            <person name="Schmutz J."/>
            <person name="Larimer F."/>
            <person name="Land M."/>
            <person name="Hauser L."/>
            <person name="Challacombe J.F."/>
            <person name="Green L."/>
            <person name="Lindler L.E."/>
            <person name="Nikolich M.P."/>
            <person name="Richardson P."/>
        </authorList>
    </citation>
    <scope>NUCLEOTIDE SEQUENCE [LARGE SCALE GENOMIC DNA]</scope>
    <source>
        <strain>PB1/+</strain>
    </source>
</reference>
<protein>
    <recommendedName>
        <fullName evidence="1">Acyl-[acyl-carrier-protein]--UDP-N-acetylglucosamine O-acyltransferase</fullName>
        <shortName evidence="1">UDP-N-acetylglucosamine acyltransferase</shortName>
        <ecNumber evidence="1">2.3.1.129</ecNumber>
    </recommendedName>
</protein>
<sequence>MIDKTAFIHPSSIVEEGAIIGAGVYIGPFCIVGSQVEIGAGTELKSHVVVNGITKIGCDNQIYQFASIGEANQDLKYAGEPTRVEVGDRNRIRESVTIHRGTTQGGGVTKVGCDNLLMVNTHVAHDCVIGNRCILANNAALGGHVEIDDYAIIGGMTAIHQFCVIGAHVMVGGCSGITQDVPPFVIAQGNHATPFGINIEGLKRRGFDKESLHAIRSAYKLLYRSGRTLDEVKPEIAELAEQYPVVKAFNDFFARSTRGIIR</sequence>
<gene>
    <name evidence="1" type="primary">lpxA</name>
    <name type="ordered locus">YPTS_3111</name>
</gene>
<feature type="chain" id="PRO_1000190870" description="Acyl-[acyl-carrier-protein]--UDP-N-acetylglucosamine O-acyltransferase">
    <location>
        <begin position="1"/>
        <end position="262"/>
    </location>
</feature>
<organism>
    <name type="scientific">Yersinia pseudotuberculosis serotype IB (strain PB1/+)</name>
    <dbReference type="NCBI Taxonomy" id="502801"/>
    <lineage>
        <taxon>Bacteria</taxon>
        <taxon>Pseudomonadati</taxon>
        <taxon>Pseudomonadota</taxon>
        <taxon>Gammaproteobacteria</taxon>
        <taxon>Enterobacterales</taxon>
        <taxon>Yersiniaceae</taxon>
        <taxon>Yersinia</taxon>
    </lineage>
</organism>
<dbReference type="EC" id="2.3.1.129" evidence="1"/>
<dbReference type="EMBL" id="CP001048">
    <property type="protein sequence ID" value="ACC90066.1"/>
    <property type="molecule type" value="Genomic_DNA"/>
</dbReference>
<dbReference type="RefSeq" id="WP_002212143.1">
    <property type="nucleotide sequence ID" value="NZ_CP009780.1"/>
</dbReference>
<dbReference type="SMR" id="B2JZ22"/>
<dbReference type="GeneID" id="57977505"/>
<dbReference type="KEGG" id="ypb:YPTS_3111"/>
<dbReference type="PATRIC" id="fig|502801.10.peg.2543"/>
<dbReference type="UniPathway" id="UPA00359">
    <property type="reaction ID" value="UER00477"/>
</dbReference>
<dbReference type="GO" id="GO:0005737">
    <property type="term" value="C:cytoplasm"/>
    <property type="evidence" value="ECO:0007669"/>
    <property type="project" value="UniProtKB-SubCell"/>
</dbReference>
<dbReference type="GO" id="GO:0016020">
    <property type="term" value="C:membrane"/>
    <property type="evidence" value="ECO:0007669"/>
    <property type="project" value="GOC"/>
</dbReference>
<dbReference type="GO" id="GO:0008780">
    <property type="term" value="F:acyl-[acyl-carrier-protein]-UDP-N-acetylglucosamine O-acyltransferase activity"/>
    <property type="evidence" value="ECO:0007669"/>
    <property type="project" value="UniProtKB-UniRule"/>
</dbReference>
<dbReference type="GO" id="GO:0009245">
    <property type="term" value="P:lipid A biosynthetic process"/>
    <property type="evidence" value="ECO:0007669"/>
    <property type="project" value="UniProtKB-UniRule"/>
</dbReference>
<dbReference type="CDD" id="cd03351">
    <property type="entry name" value="LbH_UDP-GlcNAc_AT"/>
    <property type="match status" value="1"/>
</dbReference>
<dbReference type="FunFam" id="1.20.1180.10:FF:000001">
    <property type="entry name" value="Acyl-[acyl-carrier-protein]--UDP-N-acetylglucosamine O-acyltransferase"/>
    <property type="match status" value="1"/>
</dbReference>
<dbReference type="FunFam" id="2.160.10.10:FF:000003">
    <property type="entry name" value="Acyl-[acyl-carrier-protein]--UDP-N-acetylglucosamine O-acyltransferase"/>
    <property type="match status" value="1"/>
</dbReference>
<dbReference type="Gene3D" id="2.160.10.10">
    <property type="entry name" value="Hexapeptide repeat proteins"/>
    <property type="match status" value="1"/>
</dbReference>
<dbReference type="Gene3D" id="1.20.1180.10">
    <property type="entry name" value="Udp N-acetylglucosamine O-acyltransferase, C-terminal domain"/>
    <property type="match status" value="1"/>
</dbReference>
<dbReference type="HAMAP" id="MF_00387">
    <property type="entry name" value="LpxA"/>
    <property type="match status" value="1"/>
</dbReference>
<dbReference type="InterPro" id="IPR029098">
    <property type="entry name" value="Acetyltransf_C"/>
</dbReference>
<dbReference type="InterPro" id="IPR037157">
    <property type="entry name" value="Acetyltransf_C_sf"/>
</dbReference>
<dbReference type="InterPro" id="IPR001451">
    <property type="entry name" value="Hexapep"/>
</dbReference>
<dbReference type="InterPro" id="IPR018357">
    <property type="entry name" value="Hexapep_transf_CS"/>
</dbReference>
<dbReference type="InterPro" id="IPR010137">
    <property type="entry name" value="Lipid_A_LpxA"/>
</dbReference>
<dbReference type="InterPro" id="IPR011004">
    <property type="entry name" value="Trimer_LpxA-like_sf"/>
</dbReference>
<dbReference type="NCBIfam" id="TIGR01852">
    <property type="entry name" value="lipid_A_lpxA"/>
    <property type="match status" value="1"/>
</dbReference>
<dbReference type="NCBIfam" id="NF003657">
    <property type="entry name" value="PRK05289.1"/>
    <property type="match status" value="1"/>
</dbReference>
<dbReference type="PANTHER" id="PTHR43480">
    <property type="entry name" value="ACYL-[ACYL-CARRIER-PROTEIN]--UDP-N-ACETYLGLUCOSAMINE O-ACYLTRANSFERASE"/>
    <property type="match status" value="1"/>
</dbReference>
<dbReference type="PANTHER" id="PTHR43480:SF1">
    <property type="entry name" value="ACYL-[ACYL-CARRIER-PROTEIN]--UDP-N-ACETYLGLUCOSAMINE O-ACYLTRANSFERASE, MITOCHONDRIAL-RELATED"/>
    <property type="match status" value="1"/>
</dbReference>
<dbReference type="Pfam" id="PF13720">
    <property type="entry name" value="Acetyltransf_11"/>
    <property type="match status" value="1"/>
</dbReference>
<dbReference type="Pfam" id="PF00132">
    <property type="entry name" value="Hexapep"/>
    <property type="match status" value="2"/>
</dbReference>
<dbReference type="PIRSF" id="PIRSF000456">
    <property type="entry name" value="UDP-GlcNAc_acltr"/>
    <property type="match status" value="1"/>
</dbReference>
<dbReference type="SUPFAM" id="SSF51161">
    <property type="entry name" value="Trimeric LpxA-like enzymes"/>
    <property type="match status" value="1"/>
</dbReference>
<dbReference type="PROSITE" id="PS00101">
    <property type="entry name" value="HEXAPEP_TRANSFERASES"/>
    <property type="match status" value="2"/>
</dbReference>
<proteinExistence type="inferred from homology"/>
<evidence type="ECO:0000255" key="1">
    <source>
        <dbReference type="HAMAP-Rule" id="MF_00387"/>
    </source>
</evidence>